<feature type="chain" id="PRO_1000022250" description="Potassium-transporting ATPase potassium-binding subunit">
    <location>
        <begin position="1"/>
        <end position="558"/>
    </location>
</feature>
<feature type="transmembrane region" description="Helical" evidence="1">
    <location>
        <begin position="1"/>
        <end position="21"/>
    </location>
</feature>
<feature type="transmembrane region" description="Helical" evidence="1">
    <location>
        <begin position="60"/>
        <end position="80"/>
    </location>
</feature>
<feature type="transmembrane region" description="Helical" evidence="1">
    <location>
        <begin position="129"/>
        <end position="149"/>
    </location>
</feature>
<feature type="transmembrane region" description="Helical" evidence="1">
    <location>
        <begin position="169"/>
        <end position="189"/>
    </location>
</feature>
<feature type="transmembrane region" description="Helical" evidence="1">
    <location>
        <begin position="246"/>
        <end position="266"/>
    </location>
</feature>
<feature type="transmembrane region" description="Helical" evidence="1">
    <location>
        <begin position="281"/>
        <end position="301"/>
    </location>
</feature>
<feature type="transmembrane region" description="Helical" evidence="1">
    <location>
        <begin position="326"/>
        <end position="346"/>
    </location>
</feature>
<feature type="transmembrane region" description="Helical" evidence="1">
    <location>
        <begin position="353"/>
        <end position="373"/>
    </location>
</feature>
<feature type="transmembrane region" description="Helical" evidence="1">
    <location>
        <begin position="376"/>
        <end position="396"/>
    </location>
</feature>
<feature type="transmembrane region" description="Helical" evidence="1">
    <location>
        <begin position="415"/>
        <end position="435"/>
    </location>
</feature>
<feature type="transmembrane region" description="Helical" evidence="1">
    <location>
        <begin position="485"/>
        <end position="505"/>
    </location>
</feature>
<feature type="transmembrane region" description="Helical" evidence="1">
    <location>
        <begin position="523"/>
        <end position="543"/>
    </location>
</feature>
<protein>
    <recommendedName>
        <fullName evidence="1">Potassium-transporting ATPase potassium-binding subunit</fullName>
    </recommendedName>
    <alternativeName>
        <fullName evidence="1">ATP phosphohydrolase [potassium-transporting] A chain</fullName>
    </alternativeName>
    <alternativeName>
        <fullName evidence="1">Potassium-binding and translocating subunit A</fullName>
    </alternativeName>
    <alternativeName>
        <fullName evidence="1">Potassium-translocating ATPase A chain</fullName>
    </alternativeName>
</protein>
<organism>
    <name type="scientific">Staphylococcus haemolyticus (strain JCSC1435)</name>
    <dbReference type="NCBI Taxonomy" id="279808"/>
    <lineage>
        <taxon>Bacteria</taxon>
        <taxon>Bacillati</taxon>
        <taxon>Bacillota</taxon>
        <taxon>Bacilli</taxon>
        <taxon>Bacillales</taxon>
        <taxon>Staphylococcaceae</taxon>
        <taxon>Staphylococcus</taxon>
    </lineage>
</organism>
<accession>Q4LAI3</accession>
<proteinExistence type="inferred from homology"/>
<sequence length="558" mass="61292">MSIVLFLIVFILLSLIVSRYLYSVALNVPSKIDVVFNPIEKLIYRLIGTNLEHMSGKTYIKHFLLFNGLMGGLSFVLLLIQQWLFLNPNHNLNQSVSLAFNTMASFLTNTNLQHYAGETGLSYLTQMCVITFLMFTSAASGYAVCIAMLRRLTGMTDVIGNFYQDITRFIVRVLIPFALIISLFLISQGTPQTLKGNLVIETLSGVKQTIAYGPMASLESIKHLGTNGGGFLGANSSTPFENPTYWSNYAEALSMMLIPGSLVFLFGRMLKTKQQIHPHAIMIFVAMFVMFIGFLVTCLYFEFAGNPELHHLGIAGGNMEGKETRFGIGLSALFTTITTAFTTGTVNNMHDSLTPLGGMVPMVLMMLNAVFGGEGVGLMNMLIYVMLTVFICSLMIGKTPSYLGMKIEGKEMKLIALSFLVHPLLILVFSALAFIVPGASDALTNPQFHGVSQVLYEFTSSSANNGSGFEGLGDNTVFWNISTGIVMLLARYIPIVLQILIVSSLVNKKTYQQHTQDVPINNLFFSSVLIIFIILLSGLTFLPDLMLGPIGEQLLLHV</sequence>
<comment type="function">
    <text evidence="1">Part of the high-affinity ATP-driven potassium transport (or Kdp) system, which catalyzes the hydrolysis of ATP coupled with the electrogenic transport of potassium into the cytoplasm. This subunit binds the extracellular potassium ions and delivers the ions to the membrane domain of KdpB through an intramembrane tunnel.</text>
</comment>
<comment type="subunit">
    <text evidence="1">The system is composed of three essential subunits: KdpA, KdpB and KdpC.</text>
</comment>
<comment type="subcellular location">
    <subcellularLocation>
        <location evidence="1">Cell membrane</location>
        <topology evidence="1">Multi-pass membrane protein</topology>
    </subcellularLocation>
</comment>
<comment type="similarity">
    <text evidence="1">Belongs to the KdpA family.</text>
</comment>
<gene>
    <name evidence="1" type="primary">kdpA</name>
    <name type="ordered locus">SH0033</name>
</gene>
<name>KDPA_STAHJ</name>
<evidence type="ECO:0000255" key="1">
    <source>
        <dbReference type="HAMAP-Rule" id="MF_00275"/>
    </source>
</evidence>
<keyword id="KW-1003">Cell membrane</keyword>
<keyword id="KW-0406">Ion transport</keyword>
<keyword id="KW-0472">Membrane</keyword>
<keyword id="KW-0630">Potassium</keyword>
<keyword id="KW-0633">Potassium transport</keyword>
<keyword id="KW-0812">Transmembrane</keyword>
<keyword id="KW-1133">Transmembrane helix</keyword>
<keyword id="KW-0813">Transport</keyword>
<dbReference type="EMBL" id="AP006716">
    <property type="protein sequence ID" value="BAE03342.1"/>
    <property type="molecule type" value="Genomic_DNA"/>
</dbReference>
<dbReference type="RefSeq" id="WP_011274388.1">
    <property type="nucleotide sequence ID" value="NC_007168.1"/>
</dbReference>
<dbReference type="SMR" id="Q4LAI3"/>
<dbReference type="KEGG" id="sha:SH0033"/>
<dbReference type="eggNOG" id="COG2060">
    <property type="taxonomic scope" value="Bacteria"/>
</dbReference>
<dbReference type="HOGENOM" id="CLU_018614_3_0_9"/>
<dbReference type="OrthoDB" id="9763796at2"/>
<dbReference type="Proteomes" id="UP000000543">
    <property type="component" value="Chromosome"/>
</dbReference>
<dbReference type="GO" id="GO:0005886">
    <property type="term" value="C:plasma membrane"/>
    <property type="evidence" value="ECO:0007669"/>
    <property type="project" value="UniProtKB-SubCell"/>
</dbReference>
<dbReference type="GO" id="GO:0008556">
    <property type="term" value="F:P-type potassium transmembrane transporter activity"/>
    <property type="evidence" value="ECO:0007669"/>
    <property type="project" value="InterPro"/>
</dbReference>
<dbReference type="GO" id="GO:0030955">
    <property type="term" value="F:potassium ion binding"/>
    <property type="evidence" value="ECO:0007669"/>
    <property type="project" value="UniProtKB-UniRule"/>
</dbReference>
<dbReference type="HAMAP" id="MF_00275">
    <property type="entry name" value="KdpA"/>
    <property type="match status" value="1"/>
</dbReference>
<dbReference type="InterPro" id="IPR004623">
    <property type="entry name" value="KdpA"/>
</dbReference>
<dbReference type="NCBIfam" id="TIGR00680">
    <property type="entry name" value="kdpA"/>
    <property type="match status" value="1"/>
</dbReference>
<dbReference type="PANTHER" id="PTHR30607">
    <property type="entry name" value="POTASSIUM-TRANSPORTING ATPASE A CHAIN"/>
    <property type="match status" value="1"/>
</dbReference>
<dbReference type="PANTHER" id="PTHR30607:SF2">
    <property type="entry name" value="POTASSIUM-TRANSPORTING ATPASE POTASSIUM-BINDING SUBUNIT"/>
    <property type="match status" value="1"/>
</dbReference>
<dbReference type="Pfam" id="PF03814">
    <property type="entry name" value="KdpA"/>
    <property type="match status" value="1"/>
</dbReference>
<dbReference type="PIRSF" id="PIRSF001294">
    <property type="entry name" value="K_ATPaseA"/>
    <property type="match status" value="1"/>
</dbReference>
<reference key="1">
    <citation type="journal article" date="2005" name="J. Bacteriol.">
        <title>Whole-genome sequencing of Staphylococcus haemolyticus uncovers the extreme plasticity of its genome and the evolution of human-colonizing staphylococcal species.</title>
        <authorList>
            <person name="Takeuchi F."/>
            <person name="Watanabe S."/>
            <person name="Baba T."/>
            <person name="Yuzawa H."/>
            <person name="Ito T."/>
            <person name="Morimoto Y."/>
            <person name="Kuroda M."/>
            <person name="Cui L."/>
            <person name="Takahashi M."/>
            <person name="Ankai A."/>
            <person name="Baba S."/>
            <person name="Fukui S."/>
            <person name="Lee J.C."/>
            <person name="Hiramatsu K."/>
        </authorList>
    </citation>
    <scope>NUCLEOTIDE SEQUENCE [LARGE SCALE GENOMIC DNA]</scope>
    <source>
        <strain>JCSC1435</strain>
    </source>
</reference>